<sequence>MGAYTTAPCDLEMGPEERTVVLIEKKSSTGWMWKVSVALLIAALCFAGVLLFAWYWNGKPEILIHSGQSEALTKKDHAEKTDPHSTLKRISSKAKAAIHLEGSYDEDEGLKDQVEWKNGQGQAFAQGGFRLVDNKIVIPHTGLYFVYSQASFRVSCSDGDEEGAGRHLTPLSHRISRYSESMGSDVSLMSAVRSACQNTAQEDSYSDGRGWYNTIYLGAVFQLNRGDKLETETNQLSELETDEGKTFFGVFAL</sequence>
<proteinExistence type="inferred from homology"/>
<feature type="chain" id="PRO_0000185485" description="Tumor necrosis factor">
    <location>
        <begin position="1"/>
        <end position="253"/>
    </location>
</feature>
<feature type="topological domain" description="Cytoplasmic" evidence="2">
    <location>
        <begin position="1"/>
        <end position="34"/>
    </location>
</feature>
<feature type="transmembrane region" description="Helical; Signal-anchor for type II membrane protein" evidence="1">
    <location>
        <begin position="35"/>
        <end position="57"/>
    </location>
</feature>
<feature type="topological domain" description="Extracellular" evidence="2">
    <location>
        <begin position="58"/>
        <end position="253"/>
    </location>
</feature>
<feature type="domain" description="THD" evidence="3">
    <location>
        <begin position="96"/>
        <end position="253"/>
    </location>
</feature>
<feature type="disulfide bond" evidence="3">
    <location>
        <begin position="156"/>
        <end position="196"/>
    </location>
</feature>
<protein>
    <recommendedName>
        <fullName>Tumor necrosis factor</fullName>
    </recommendedName>
    <alternativeName>
        <fullName>TNF-alpha</fullName>
    </alternativeName>
</protein>
<dbReference type="EMBL" id="AJ413189">
    <property type="protein sequence ID" value="CAC88353.1"/>
    <property type="molecule type" value="Genomic_DNA"/>
</dbReference>
<dbReference type="SMR" id="Q8JFG3"/>
<dbReference type="FunCoup" id="Q8JFG3">
    <property type="interactions" value="719"/>
</dbReference>
<dbReference type="InParanoid" id="Q8JFG3"/>
<dbReference type="Proteomes" id="UP000472265">
    <property type="component" value="Unplaced"/>
</dbReference>
<dbReference type="GO" id="GO:0005615">
    <property type="term" value="C:extracellular space"/>
    <property type="evidence" value="ECO:0007669"/>
    <property type="project" value="UniProtKB-KW"/>
</dbReference>
<dbReference type="GO" id="GO:0016020">
    <property type="term" value="C:membrane"/>
    <property type="evidence" value="ECO:0007669"/>
    <property type="project" value="UniProtKB-SubCell"/>
</dbReference>
<dbReference type="GO" id="GO:0005125">
    <property type="term" value="F:cytokine activity"/>
    <property type="evidence" value="ECO:0007669"/>
    <property type="project" value="UniProtKB-KW"/>
</dbReference>
<dbReference type="GO" id="GO:0005164">
    <property type="term" value="F:tumor necrosis factor receptor binding"/>
    <property type="evidence" value="ECO:0007669"/>
    <property type="project" value="InterPro"/>
</dbReference>
<dbReference type="GO" id="GO:0006955">
    <property type="term" value="P:immune response"/>
    <property type="evidence" value="ECO:0007669"/>
    <property type="project" value="InterPro"/>
</dbReference>
<dbReference type="CDD" id="cd00184">
    <property type="entry name" value="TNF"/>
    <property type="match status" value="1"/>
</dbReference>
<dbReference type="Gene3D" id="2.60.120.40">
    <property type="match status" value="1"/>
</dbReference>
<dbReference type="InterPro" id="IPR006053">
    <property type="entry name" value="TNF"/>
</dbReference>
<dbReference type="InterPro" id="IPR006052">
    <property type="entry name" value="TNF_dom"/>
</dbReference>
<dbReference type="InterPro" id="IPR008983">
    <property type="entry name" value="Tumour_necrosis_fac-like_dom"/>
</dbReference>
<dbReference type="PANTHER" id="PTHR11471:SF23">
    <property type="entry name" value="TUMOR NECROSIS FACTOR"/>
    <property type="match status" value="1"/>
</dbReference>
<dbReference type="PANTHER" id="PTHR11471">
    <property type="entry name" value="TUMOR NECROSIS FACTOR FAMILY MEMBER"/>
    <property type="match status" value="1"/>
</dbReference>
<dbReference type="Pfam" id="PF00229">
    <property type="entry name" value="TNF"/>
    <property type="match status" value="1"/>
</dbReference>
<dbReference type="PRINTS" id="PR01234">
    <property type="entry name" value="TNECROSISFCT"/>
</dbReference>
<dbReference type="SMART" id="SM00207">
    <property type="entry name" value="TNF"/>
    <property type="match status" value="1"/>
</dbReference>
<dbReference type="SUPFAM" id="SSF49842">
    <property type="entry name" value="TNF-like"/>
    <property type="match status" value="1"/>
</dbReference>
<dbReference type="PROSITE" id="PS50049">
    <property type="entry name" value="THD_2"/>
    <property type="match status" value="1"/>
</dbReference>
<name>TNFA_SPAAU</name>
<organism>
    <name type="scientific">Sparus aurata</name>
    <name type="common">Gilthead sea bream</name>
    <dbReference type="NCBI Taxonomy" id="8175"/>
    <lineage>
        <taxon>Eukaryota</taxon>
        <taxon>Metazoa</taxon>
        <taxon>Chordata</taxon>
        <taxon>Craniata</taxon>
        <taxon>Vertebrata</taxon>
        <taxon>Euteleostomi</taxon>
        <taxon>Actinopterygii</taxon>
        <taxon>Neopterygii</taxon>
        <taxon>Teleostei</taxon>
        <taxon>Neoteleostei</taxon>
        <taxon>Acanthomorphata</taxon>
        <taxon>Eupercaria</taxon>
        <taxon>Spariformes</taxon>
        <taxon>Sparidae</taxon>
        <taxon>Sparus</taxon>
    </lineage>
</organism>
<evidence type="ECO:0000250" key="1"/>
<evidence type="ECO:0000255" key="2"/>
<evidence type="ECO:0000255" key="3">
    <source>
        <dbReference type="PROSITE-ProRule" id="PRU01387"/>
    </source>
</evidence>
<evidence type="ECO:0000305" key="4"/>
<comment type="function">
    <text evidence="1">Cytokine that binds to TNFRSF1A/TNFR1 and TNFRSF1B/TNFBR.</text>
</comment>
<comment type="subunit">
    <text evidence="1">Homotrimer.</text>
</comment>
<comment type="subcellular location">
    <subcellularLocation>
        <location>Membrane</location>
        <topology>Single-pass type II membrane protein</topology>
    </subcellularLocation>
</comment>
<comment type="similarity">
    <text evidence="4">Belongs to the tumor necrosis factor family.</text>
</comment>
<accession>Q8JFG3</accession>
<keyword id="KW-0202">Cytokine</keyword>
<keyword id="KW-1015">Disulfide bond</keyword>
<keyword id="KW-0472">Membrane</keyword>
<keyword id="KW-1185">Reference proteome</keyword>
<keyword id="KW-0735">Signal-anchor</keyword>
<keyword id="KW-0812">Transmembrane</keyword>
<keyword id="KW-1133">Transmembrane helix</keyword>
<reference key="1">
    <citation type="journal article" date="2002" name="Immunogenetics">
        <title>Molecular cloning and expression analysis of tumor necrosis factor alpha from a marine fish reveal its constitutive expression and ubiquitous nature.</title>
        <authorList>
            <person name="Garcia-Castillo J."/>
            <person name="Pelegrin P."/>
            <person name="Mulero V."/>
            <person name="Meseguer J."/>
        </authorList>
    </citation>
    <scope>NUCLEOTIDE SEQUENCE [GENOMIC DNA]</scope>
    <source>
        <tissue>Kidney</tissue>
    </source>
</reference>
<gene>
    <name type="primary">tnf</name>
    <name type="synonym">tnfa</name>
</gene>